<sequence length="229" mass="24460">MGKKYIESAKLVDKNTLYAPDEAVDLVVKTSKAKFDETVELAVRLGVDPRHADQQVRGVVILPNGTGKKVRVLVFAKGDKAKEAEAAGADYVGAEELATKIQSENWFDFDVVVATPDMMGVVGRLGRVLGPKGLMPNPKSGTVTFDVAKALTEIKAGKVEYRVDKTAIVHVPVGKSSFGAEKLKQNFHALMDAIVKAKPASAKGQYVKSVALSSTMGPGIKINPVKVLD</sequence>
<gene>
    <name evidence="1" type="primary">rplA</name>
    <name type="ordered locus">CA_C3147</name>
</gene>
<name>RL1_CLOAB</name>
<feature type="chain" id="PRO_0000125644" description="Large ribosomal subunit protein uL1">
    <location>
        <begin position="1"/>
        <end position="229"/>
    </location>
</feature>
<proteinExistence type="inferred from homology"/>
<protein>
    <recommendedName>
        <fullName evidence="1">Large ribosomal subunit protein uL1</fullName>
    </recommendedName>
    <alternativeName>
        <fullName evidence="2">50S ribosomal protein L1</fullName>
    </alternativeName>
</protein>
<comment type="function">
    <text evidence="1">Binds directly to 23S rRNA. The L1 stalk is quite mobile in the ribosome, and is involved in E site tRNA release.</text>
</comment>
<comment type="function">
    <text evidence="1">Protein L1 is also a translational repressor protein, it controls the translation of the L11 operon by binding to its mRNA.</text>
</comment>
<comment type="subunit">
    <text evidence="1">Part of the 50S ribosomal subunit.</text>
</comment>
<comment type="similarity">
    <text evidence="1">Belongs to the universal ribosomal protein uL1 family.</text>
</comment>
<organism>
    <name type="scientific">Clostridium acetobutylicum (strain ATCC 824 / DSM 792 / JCM 1419 / IAM 19013 / LMG 5710 / NBRC 13948 / NRRL B-527 / VKM B-1787 / 2291 / W)</name>
    <dbReference type="NCBI Taxonomy" id="272562"/>
    <lineage>
        <taxon>Bacteria</taxon>
        <taxon>Bacillati</taxon>
        <taxon>Bacillota</taxon>
        <taxon>Clostridia</taxon>
        <taxon>Eubacteriales</taxon>
        <taxon>Clostridiaceae</taxon>
        <taxon>Clostridium</taxon>
    </lineage>
</organism>
<evidence type="ECO:0000255" key="1">
    <source>
        <dbReference type="HAMAP-Rule" id="MF_01318"/>
    </source>
</evidence>
<evidence type="ECO:0000305" key="2"/>
<accession>Q97EG6</accession>
<dbReference type="EMBL" id="AE001437">
    <property type="protein sequence ID" value="AAK81084.1"/>
    <property type="molecule type" value="Genomic_DNA"/>
</dbReference>
<dbReference type="PIR" id="A97287">
    <property type="entry name" value="A97287"/>
</dbReference>
<dbReference type="RefSeq" id="NP_349744.1">
    <property type="nucleotide sequence ID" value="NC_003030.1"/>
</dbReference>
<dbReference type="RefSeq" id="WP_010966424.1">
    <property type="nucleotide sequence ID" value="NC_003030.1"/>
</dbReference>
<dbReference type="SMR" id="Q97EG6"/>
<dbReference type="STRING" id="272562.CA_C3147"/>
<dbReference type="GeneID" id="44999632"/>
<dbReference type="KEGG" id="cac:CA_C3147"/>
<dbReference type="PATRIC" id="fig|272562.8.peg.3327"/>
<dbReference type="eggNOG" id="COG0081">
    <property type="taxonomic scope" value="Bacteria"/>
</dbReference>
<dbReference type="HOGENOM" id="CLU_062853_0_0_9"/>
<dbReference type="OrthoDB" id="9803740at2"/>
<dbReference type="Proteomes" id="UP000000814">
    <property type="component" value="Chromosome"/>
</dbReference>
<dbReference type="GO" id="GO:0015934">
    <property type="term" value="C:large ribosomal subunit"/>
    <property type="evidence" value="ECO:0007669"/>
    <property type="project" value="InterPro"/>
</dbReference>
<dbReference type="GO" id="GO:0019843">
    <property type="term" value="F:rRNA binding"/>
    <property type="evidence" value="ECO:0007669"/>
    <property type="project" value="UniProtKB-UniRule"/>
</dbReference>
<dbReference type="GO" id="GO:0003735">
    <property type="term" value="F:structural constituent of ribosome"/>
    <property type="evidence" value="ECO:0007669"/>
    <property type="project" value="InterPro"/>
</dbReference>
<dbReference type="GO" id="GO:0000049">
    <property type="term" value="F:tRNA binding"/>
    <property type="evidence" value="ECO:0007669"/>
    <property type="project" value="UniProtKB-KW"/>
</dbReference>
<dbReference type="GO" id="GO:0006417">
    <property type="term" value="P:regulation of translation"/>
    <property type="evidence" value="ECO:0007669"/>
    <property type="project" value="UniProtKB-KW"/>
</dbReference>
<dbReference type="GO" id="GO:0006412">
    <property type="term" value="P:translation"/>
    <property type="evidence" value="ECO:0007669"/>
    <property type="project" value="UniProtKB-UniRule"/>
</dbReference>
<dbReference type="CDD" id="cd00403">
    <property type="entry name" value="Ribosomal_L1"/>
    <property type="match status" value="1"/>
</dbReference>
<dbReference type="FunFam" id="3.40.50.790:FF:000001">
    <property type="entry name" value="50S ribosomal protein L1"/>
    <property type="match status" value="1"/>
</dbReference>
<dbReference type="Gene3D" id="3.30.190.20">
    <property type="match status" value="1"/>
</dbReference>
<dbReference type="Gene3D" id="3.40.50.790">
    <property type="match status" value="1"/>
</dbReference>
<dbReference type="HAMAP" id="MF_01318_B">
    <property type="entry name" value="Ribosomal_uL1_B"/>
    <property type="match status" value="1"/>
</dbReference>
<dbReference type="InterPro" id="IPR005878">
    <property type="entry name" value="Ribosom_uL1_bac-type"/>
</dbReference>
<dbReference type="InterPro" id="IPR002143">
    <property type="entry name" value="Ribosomal_uL1"/>
</dbReference>
<dbReference type="InterPro" id="IPR023674">
    <property type="entry name" value="Ribosomal_uL1-like"/>
</dbReference>
<dbReference type="InterPro" id="IPR028364">
    <property type="entry name" value="Ribosomal_uL1/biogenesis"/>
</dbReference>
<dbReference type="InterPro" id="IPR016095">
    <property type="entry name" value="Ribosomal_uL1_3-a/b-sand"/>
</dbReference>
<dbReference type="InterPro" id="IPR023673">
    <property type="entry name" value="Ribosomal_uL1_CS"/>
</dbReference>
<dbReference type="NCBIfam" id="TIGR01169">
    <property type="entry name" value="rplA_bact"/>
    <property type="match status" value="1"/>
</dbReference>
<dbReference type="PANTHER" id="PTHR36427">
    <property type="entry name" value="54S RIBOSOMAL PROTEIN L1, MITOCHONDRIAL"/>
    <property type="match status" value="1"/>
</dbReference>
<dbReference type="PANTHER" id="PTHR36427:SF3">
    <property type="entry name" value="LARGE RIBOSOMAL SUBUNIT PROTEIN UL1M"/>
    <property type="match status" value="1"/>
</dbReference>
<dbReference type="Pfam" id="PF00687">
    <property type="entry name" value="Ribosomal_L1"/>
    <property type="match status" value="1"/>
</dbReference>
<dbReference type="PIRSF" id="PIRSF002155">
    <property type="entry name" value="Ribosomal_L1"/>
    <property type="match status" value="1"/>
</dbReference>
<dbReference type="SUPFAM" id="SSF56808">
    <property type="entry name" value="Ribosomal protein L1"/>
    <property type="match status" value="1"/>
</dbReference>
<dbReference type="PROSITE" id="PS01199">
    <property type="entry name" value="RIBOSOMAL_L1"/>
    <property type="match status" value="1"/>
</dbReference>
<keyword id="KW-1185">Reference proteome</keyword>
<keyword id="KW-0678">Repressor</keyword>
<keyword id="KW-0687">Ribonucleoprotein</keyword>
<keyword id="KW-0689">Ribosomal protein</keyword>
<keyword id="KW-0694">RNA-binding</keyword>
<keyword id="KW-0699">rRNA-binding</keyword>
<keyword id="KW-0810">Translation regulation</keyword>
<keyword id="KW-0820">tRNA-binding</keyword>
<reference key="1">
    <citation type="journal article" date="2001" name="J. Bacteriol.">
        <title>Genome sequence and comparative analysis of the solvent-producing bacterium Clostridium acetobutylicum.</title>
        <authorList>
            <person name="Noelling J."/>
            <person name="Breton G."/>
            <person name="Omelchenko M.V."/>
            <person name="Makarova K.S."/>
            <person name="Zeng Q."/>
            <person name="Gibson R."/>
            <person name="Lee H.M."/>
            <person name="Dubois J."/>
            <person name="Qiu D."/>
            <person name="Hitti J."/>
            <person name="Wolf Y.I."/>
            <person name="Tatusov R.L."/>
            <person name="Sabathe F."/>
            <person name="Doucette-Stamm L.A."/>
            <person name="Soucaille P."/>
            <person name="Daly M.J."/>
            <person name="Bennett G.N."/>
            <person name="Koonin E.V."/>
            <person name="Smith D.R."/>
        </authorList>
    </citation>
    <scope>NUCLEOTIDE SEQUENCE [LARGE SCALE GENOMIC DNA]</scope>
    <source>
        <strain>ATCC 824 / DSM 792 / JCM 1419 / IAM 19013 / LMG 5710 / NBRC 13948 / NRRL B-527 / VKM B-1787 / 2291 / W</strain>
    </source>
</reference>